<evidence type="ECO:0000255" key="1">
    <source>
        <dbReference type="HAMAP-Rule" id="MF_00122"/>
    </source>
</evidence>
<dbReference type="EC" id="6.3.5.-" evidence="1"/>
<dbReference type="EMBL" id="CP000702">
    <property type="protein sequence ID" value="ABQ46692.1"/>
    <property type="molecule type" value="Genomic_DNA"/>
</dbReference>
<dbReference type="RefSeq" id="WP_004082956.1">
    <property type="nucleotide sequence ID" value="NC_009486.1"/>
</dbReference>
<dbReference type="SMR" id="A5IKG9"/>
<dbReference type="STRING" id="390874.Tpet_0672"/>
<dbReference type="KEGG" id="tpt:Tpet_0672"/>
<dbReference type="eggNOG" id="COG0721">
    <property type="taxonomic scope" value="Bacteria"/>
</dbReference>
<dbReference type="HOGENOM" id="CLU_105899_4_1_0"/>
<dbReference type="Proteomes" id="UP000006558">
    <property type="component" value="Chromosome"/>
</dbReference>
<dbReference type="GO" id="GO:0050566">
    <property type="term" value="F:asparaginyl-tRNA synthase (glutamine-hydrolyzing) activity"/>
    <property type="evidence" value="ECO:0007669"/>
    <property type="project" value="RHEA"/>
</dbReference>
<dbReference type="GO" id="GO:0005524">
    <property type="term" value="F:ATP binding"/>
    <property type="evidence" value="ECO:0007669"/>
    <property type="project" value="UniProtKB-KW"/>
</dbReference>
<dbReference type="GO" id="GO:0050567">
    <property type="term" value="F:glutaminyl-tRNA synthase (glutamine-hydrolyzing) activity"/>
    <property type="evidence" value="ECO:0007669"/>
    <property type="project" value="UniProtKB-UniRule"/>
</dbReference>
<dbReference type="GO" id="GO:0070681">
    <property type="term" value="P:glutaminyl-tRNAGln biosynthesis via transamidation"/>
    <property type="evidence" value="ECO:0007669"/>
    <property type="project" value="TreeGrafter"/>
</dbReference>
<dbReference type="GO" id="GO:0006450">
    <property type="term" value="P:regulation of translational fidelity"/>
    <property type="evidence" value="ECO:0007669"/>
    <property type="project" value="InterPro"/>
</dbReference>
<dbReference type="GO" id="GO:0006412">
    <property type="term" value="P:translation"/>
    <property type="evidence" value="ECO:0007669"/>
    <property type="project" value="UniProtKB-UniRule"/>
</dbReference>
<dbReference type="Gene3D" id="1.10.20.60">
    <property type="entry name" value="Glu-tRNAGln amidotransferase C subunit, N-terminal domain"/>
    <property type="match status" value="1"/>
</dbReference>
<dbReference type="HAMAP" id="MF_00122">
    <property type="entry name" value="GatC"/>
    <property type="match status" value="1"/>
</dbReference>
<dbReference type="InterPro" id="IPR036113">
    <property type="entry name" value="Asp/Glu-ADT_sf_sub_c"/>
</dbReference>
<dbReference type="InterPro" id="IPR003837">
    <property type="entry name" value="GatC"/>
</dbReference>
<dbReference type="NCBIfam" id="TIGR00135">
    <property type="entry name" value="gatC"/>
    <property type="match status" value="1"/>
</dbReference>
<dbReference type="PANTHER" id="PTHR15004">
    <property type="entry name" value="GLUTAMYL-TRNA(GLN) AMIDOTRANSFERASE SUBUNIT C, MITOCHONDRIAL"/>
    <property type="match status" value="1"/>
</dbReference>
<dbReference type="PANTHER" id="PTHR15004:SF0">
    <property type="entry name" value="GLUTAMYL-TRNA(GLN) AMIDOTRANSFERASE SUBUNIT C, MITOCHONDRIAL"/>
    <property type="match status" value="1"/>
</dbReference>
<dbReference type="Pfam" id="PF02686">
    <property type="entry name" value="GatC"/>
    <property type="match status" value="1"/>
</dbReference>
<dbReference type="SUPFAM" id="SSF141000">
    <property type="entry name" value="Glu-tRNAGln amidotransferase C subunit"/>
    <property type="match status" value="1"/>
</dbReference>
<proteinExistence type="inferred from homology"/>
<gene>
    <name evidence="1" type="primary">gatC</name>
    <name type="ordered locus">Tpet_0672</name>
</gene>
<reference key="1">
    <citation type="submission" date="2007-05" db="EMBL/GenBank/DDBJ databases">
        <title>Complete sequence of Thermotoga petrophila RKU-1.</title>
        <authorList>
            <consortium name="US DOE Joint Genome Institute"/>
            <person name="Copeland A."/>
            <person name="Lucas S."/>
            <person name="Lapidus A."/>
            <person name="Barry K."/>
            <person name="Glavina del Rio T."/>
            <person name="Dalin E."/>
            <person name="Tice H."/>
            <person name="Pitluck S."/>
            <person name="Sims D."/>
            <person name="Brettin T."/>
            <person name="Bruce D."/>
            <person name="Detter J.C."/>
            <person name="Han C."/>
            <person name="Tapia R."/>
            <person name="Schmutz J."/>
            <person name="Larimer F."/>
            <person name="Land M."/>
            <person name="Hauser L."/>
            <person name="Kyrpides N."/>
            <person name="Mikhailova N."/>
            <person name="Nelson K."/>
            <person name="Gogarten J.P."/>
            <person name="Noll K."/>
            <person name="Richardson P."/>
        </authorList>
    </citation>
    <scope>NUCLEOTIDE SEQUENCE [LARGE SCALE GENOMIC DNA]</scope>
    <source>
        <strain>ATCC BAA-488 / DSM 13995 / JCM 10881 / RKU-1</strain>
    </source>
</reference>
<keyword id="KW-0067">ATP-binding</keyword>
<keyword id="KW-0436">Ligase</keyword>
<keyword id="KW-0547">Nucleotide-binding</keyword>
<keyword id="KW-0648">Protein biosynthesis</keyword>
<sequence length="96" mass="11309">MIKVTKDLVLHLENLARLELSEDQRESLMKDFQEILDYVELLNEVDVEGVEPMYTPVEDSAKLRKGDPRFFEMRDLIKKNFPEEKDGHIKVPGIHR</sequence>
<protein>
    <recommendedName>
        <fullName evidence="1">Aspartyl/glutamyl-tRNA(Asn/Gln) amidotransferase subunit C</fullName>
        <shortName evidence="1">Asp/Glu-ADT subunit C</shortName>
        <ecNumber evidence="1">6.3.5.-</ecNumber>
    </recommendedName>
</protein>
<organism>
    <name type="scientific">Thermotoga petrophila (strain ATCC BAA-488 / DSM 13995 / JCM 10881 / RKU-1)</name>
    <dbReference type="NCBI Taxonomy" id="390874"/>
    <lineage>
        <taxon>Bacteria</taxon>
        <taxon>Thermotogati</taxon>
        <taxon>Thermotogota</taxon>
        <taxon>Thermotogae</taxon>
        <taxon>Thermotogales</taxon>
        <taxon>Thermotogaceae</taxon>
        <taxon>Thermotoga</taxon>
    </lineage>
</organism>
<accession>A5IKG9</accession>
<feature type="chain" id="PRO_1000016237" description="Aspartyl/glutamyl-tRNA(Asn/Gln) amidotransferase subunit C">
    <location>
        <begin position="1"/>
        <end position="96"/>
    </location>
</feature>
<name>GATC_THEP1</name>
<comment type="function">
    <text evidence="1">Allows the formation of correctly charged Asn-tRNA(Asn) or Gln-tRNA(Gln) through the transamidation of misacylated Asp-tRNA(Asn) or Glu-tRNA(Gln) in organisms which lack either or both of asparaginyl-tRNA or glutaminyl-tRNA synthetases. The reaction takes place in the presence of glutamine and ATP through an activated phospho-Asp-tRNA(Asn) or phospho-Glu-tRNA(Gln).</text>
</comment>
<comment type="catalytic activity">
    <reaction evidence="1">
        <text>L-glutamyl-tRNA(Gln) + L-glutamine + ATP + H2O = L-glutaminyl-tRNA(Gln) + L-glutamate + ADP + phosphate + H(+)</text>
        <dbReference type="Rhea" id="RHEA:17521"/>
        <dbReference type="Rhea" id="RHEA-COMP:9681"/>
        <dbReference type="Rhea" id="RHEA-COMP:9684"/>
        <dbReference type="ChEBI" id="CHEBI:15377"/>
        <dbReference type="ChEBI" id="CHEBI:15378"/>
        <dbReference type="ChEBI" id="CHEBI:29985"/>
        <dbReference type="ChEBI" id="CHEBI:30616"/>
        <dbReference type="ChEBI" id="CHEBI:43474"/>
        <dbReference type="ChEBI" id="CHEBI:58359"/>
        <dbReference type="ChEBI" id="CHEBI:78520"/>
        <dbReference type="ChEBI" id="CHEBI:78521"/>
        <dbReference type="ChEBI" id="CHEBI:456216"/>
    </reaction>
</comment>
<comment type="catalytic activity">
    <reaction evidence="1">
        <text>L-aspartyl-tRNA(Asn) + L-glutamine + ATP + H2O = L-asparaginyl-tRNA(Asn) + L-glutamate + ADP + phosphate + 2 H(+)</text>
        <dbReference type="Rhea" id="RHEA:14513"/>
        <dbReference type="Rhea" id="RHEA-COMP:9674"/>
        <dbReference type="Rhea" id="RHEA-COMP:9677"/>
        <dbReference type="ChEBI" id="CHEBI:15377"/>
        <dbReference type="ChEBI" id="CHEBI:15378"/>
        <dbReference type="ChEBI" id="CHEBI:29985"/>
        <dbReference type="ChEBI" id="CHEBI:30616"/>
        <dbReference type="ChEBI" id="CHEBI:43474"/>
        <dbReference type="ChEBI" id="CHEBI:58359"/>
        <dbReference type="ChEBI" id="CHEBI:78515"/>
        <dbReference type="ChEBI" id="CHEBI:78516"/>
        <dbReference type="ChEBI" id="CHEBI:456216"/>
    </reaction>
</comment>
<comment type="subunit">
    <text evidence="1">Heterotrimer of A, B and C subunits.</text>
</comment>
<comment type="similarity">
    <text evidence="1">Belongs to the GatC family.</text>
</comment>